<feature type="chain" id="PRO_0000063838" description="Intermediate filament protein ifb-1">
    <location>
        <begin position="1"/>
        <end position="589"/>
    </location>
</feature>
<feature type="domain" description="IF rod" evidence="3">
    <location>
        <begin position="81"/>
        <end position="433"/>
    </location>
</feature>
<feature type="domain" description="LTD" evidence="2">
    <location>
        <begin position="466"/>
        <end position="584"/>
    </location>
</feature>
<feature type="region of interest" description="Disordered" evidence="4">
    <location>
        <begin position="1"/>
        <end position="42"/>
    </location>
</feature>
<feature type="region of interest" description="Head">
    <location>
        <begin position="8"/>
        <end position="84"/>
    </location>
</feature>
<feature type="region of interest" description="Coil 1A">
    <location>
        <begin position="85"/>
        <end position="116"/>
    </location>
</feature>
<feature type="region of interest" description="Linker 1">
    <location>
        <begin position="117"/>
        <end position="130"/>
    </location>
</feature>
<feature type="region of interest" description="Coil 1B">
    <location>
        <begin position="131"/>
        <end position="268"/>
    </location>
</feature>
<feature type="region of interest" description="Linker 12">
    <location>
        <begin position="269"/>
        <end position="285"/>
    </location>
</feature>
<feature type="region of interest" description="Coil 2">
    <location>
        <begin position="286"/>
        <end position="433"/>
    </location>
</feature>
<feature type="region of interest" description="Tail">
    <location>
        <begin position="434"/>
        <end position="588"/>
    </location>
</feature>
<feature type="region of interest" description="Disordered" evidence="4">
    <location>
        <begin position="444"/>
        <end position="470"/>
    </location>
</feature>
<feature type="compositionally biased region" description="Polar residues" evidence="4">
    <location>
        <begin position="14"/>
        <end position="30"/>
    </location>
</feature>
<feature type="splice variant" id="VSP_010147" description="In isoform b." evidence="9">
    <original>MSSHKESSEYEMQYRSTIQPRTAVRSQSRQSGNYVSGGNGAG</original>
    <variation>MEAESAPQAPM</variation>
    <location>
        <begin position="1"/>
        <end position="42"/>
    </location>
</feature>
<sequence length="589" mass="67149">MSSHKESSEYEMQYRSTIQPRTAVRSQSRQSGNYVSGGNGAGSGGRVLKMVTEMGSATVGGISPALSANAAKSFLEATDKEKKTLQGLNDRLGNYIDRVKKLEEQNRKLVADLDELRGKWGKDTSEIKIKYSESLSTARKDIDDAARRKAEVDVKVARHRDDLAEYRSRYEDIQQRRESDREKISQWTNAIADAQSEVEMLRARFKQLTDEEKRVTADNSRIWEELQKARSDLDDETIGRIDFQNQVQTLMEELEFLRRVHEQEVKELQALLAQAPADTREFFKNELALAIRDIKDEYDIIAKQGKQDMESWYKLKVSEVQGSANRANMESTYQRDEVKRMRDNIGDLRGKLGDLENKNSLLEKEVQNLNYQLTDDQRQYEAALNDRDATLRRMREECQTLVAELQALLDTKQMLDAEIAIYRKMLEGEETRVGLTQMVEQAVKTHSLQQQENTDSTRSVRGEVSTKTTFQRSAKGNVTISECDPNGKFIKLENSHRNKDENVGEHKIRRKLDGRREIVYSIPANVVIKPGKNLTIYARDQGGINNPPESLVFDGENTWGIGANVVTSLVNKDGEERATHTQKTIQSGQ</sequence>
<dbReference type="EMBL" id="X70830">
    <property type="protein sequence ID" value="CAA50178.1"/>
    <property type="status" value="ALT_SEQ"/>
    <property type="molecule type" value="Genomic_DNA"/>
</dbReference>
<dbReference type="EMBL" id="FO080600">
    <property type="protein sequence ID" value="CCD65029.1"/>
    <property type="molecule type" value="Genomic_DNA"/>
</dbReference>
<dbReference type="EMBL" id="FO080600">
    <property type="protein sequence ID" value="CCD65030.1"/>
    <property type="molecule type" value="Genomic_DNA"/>
</dbReference>
<dbReference type="PIR" id="D88163">
    <property type="entry name" value="D88163"/>
</dbReference>
<dbReference type="PIR" id="T16018">
    <property type="entry name" value="S46326"/>
</dbReference>
<dbReference type="RefSeq" id="NP_001379694.1">
    <molecule id="Q19289-1"/>
    <property type="nucleotide sequence ID" value="NM_001393083.1"/>
</dbReference>
<dbReference type="RefSeq" id="NP_495136.1">
    <property type="nucleotide sequence ID" value="NM_062735.4"/>
</dbReference>
<dbReference type="RefSeq" id="NP_495137.1">
    <molecule id="Q19289-2"/>
    <property type="nucleotide sequence ID" value="NM_062736.5"/>
</dbReference>
<dbReference type="SMR" id="Q19289"/>
<dbReference type="BioGRID" id="39317">
    <property type="interactions" value="23"/>
</dbReference>
<dbReference type="DIP" id="DIP-26309N"/>
<dbReference type="FunCoup" id="Q19289">
    <property type="interactions" value="9"/>
</dbReference>
<dbReference type="IntAct" id="Q19289">
    <property type="interactions" value="9"/>
</dbReference>
<dbReference type="STRING" id="6239.F10C1.2b.1"/>
<dbReference type="PaxDb" id="6239-F10C1.2b"/>
<dbReference type="PeptideAtlas" id="Q19289"/>
<dbReference type="EnsemblMetazoa" id="F10C1.2a.1">
    <molecule id="Q19289-2"/>
    <property type="protein sequence ID" value="F10C1.2a.1"/>
    <property type="gene ID" value="WBGene00002053"/>
</dbReference>
<dbReference type="EnsemblMetazoa" id="F10C1.2b.1">
    <molecule id="Q19289-1"/>
    <property type="protein sequence ID" value="F10C1.2b.1"/>
    <property type="gene ID" value="WBGene00002053"/>
</dbReference>
<dbReference type="GeneID" id="173976"/>
<dbReference type="KEGG" id="cel:CELE_F10C1.2"/>
<dbReference type="UCSC" id="F10C1.2b">
    <molecule id="Q19289-1"/>
    <property type="organism name" value="c. elegans"/>
</dbReference>
<dbReference type="AGR" id="WB:WBGene00002053"/>
<dbReference type="CTD" id="173976"/>
<dbReference type="WormBase" id="F10C1.2a">
    <molecule id="Q19289-2"/>
    <property type="protein sequence ID" value="CE02618"/>
    <property type="gene ID" value="WBGene00002053"/>
    <property type="gene designation" value="ifb-1"/>
</dbReference>
<dbReference type="WormBase" id="F10C1.2b">
    <molecule id="Q19289-1"/>
    <property type="protein sequence ID" value="CE02619"/>
    <property type="gene ID" value="WBGene00002053"/>
    <property type="gene designation" value="ifb-1"/>
</dbReference>
<dbReference type="eggNOG" id="KOG0977">
    <property type="taxonomic scope" value="Eukaryota"/>
</dbReference>
<dbReference type="InParanoid" id="Q19289"/>
<dbReference type="OMA" id="KQDMESW"/>
<dbReference type="OrthoDB" id="2441647at2759"/>
<dbReference type="PhylomeDB" id="Q19289"/>
<dbReference type="Reactome" id="R-CEL-2559584">
    <property type="pathway name" value="Formation of Senescence-Associated Heterochromatin Foci (SAHF)"/>
</dbReference>
<dbReference type="Reactome" id="R-CEL-4419969">
    <property type="pathway name" value="Depolymerization of the Nuclear Lamina"/>
</dbReference>
<dbReference type="Reactome" id="R-CEL-9013405">
    <property type="pathway name" value="RHOD GTPase cycle"/>
</dbReference>
<dbReference type="Reactome" id="R-CEL-9035034">
    <property type="pathway name" value="RHOF GTPase cycle"/>
</dbReference>
<dbReference type="SignaLink" id="Q19289"/>
<dbReference type="PRO" id="PR:Q19289"/>
<dbReference type="Proteomes" id="UP000001940">
    <property type="component" value="Chromosome II"/>
</dbReference>
<dbReference type="Bgee" id="WBGene00002053">
    <property type="expression patterns" value="Expressed in larva and 4 other cell types or tissues"/>
</dbReference>
<dbReference type="GO" id="GO:0016324">
    <property type="term" value="C:apical plasma membrane"/>
    <property type="evidence" value="ECO:0000314"/>
    <property type="project" value="WormBase"/>
</dbReference>
<dbReference type="GO" id="GO:0005737">
    <property type="term" value="C:cytoplasm"/>
    <property type="evidence" value="ECO:0007669"/>
    <property type="project" value="UniProtKB-SubCell"/>
</dbReference>
<dbReference type="GO" id="GO:0005882">
    <property type="term" value="C:intermediate filament"/>
    <property type="evidence" value="ECO:0007669"/>
    <property type="project" value="UniProtKB-KW"/>
</dbReference>
<dbReference type="GO" id="GO:0005635">
    <property type="term" value="C:nuclear envelope"/>
    <property type="evidence" value="ECO:0000318"/>
    <property type="project" value="GO_Central"/>
</dbReference>
<dbReference type="GO" id="GO:0005652">
    <property type="term" value="C:nuclear lamina"/>
    <property type="evidence" value="ECO:0000318"/>
    <property type="project" value="GO_Central"/>
</dbReference>
<dbReference type="GO" id="GO:0005200">
    <property type="term" value="F:structural constituent of cytoskeleton"/>
    <property type="evidence" value="ECO:0000318"/>
    <property type="project" value="GO_Central"/>
</dbReference>
<dbReference type="GO" id="GO:0031507">
    <property type="term" value="P:heterochromatin formation"/>
    <property type="evidence" value="ECO:0000318"/>
    <property type="project" value="GO_Central"/>
</dbReference>
<dbReference type="GO" id="GO:0006998">
    <property type="term" value="P:nuclear envelope organization"/>
    <property type="evidence" value="ECO:0000318"/>
    <property type="project" value="GO_Central"/>
</dbReference>
<dbReference type="GO" id="GO:0007097">
    <property type="term" value="P:nuclear migration"/>
    <property type="evidence" value="ECO:0000318"/>
    <property type="project" value="GO_Central"/>
</dbReference>
<dbReference type="GO" id="GO:0051664">
    <property type="term" value="P:nuclear pore localization"/>
    <property type="evidence" value="ECO:0000318"/>
    <property type="project" value="GO_Central"/>
</dbReference>
<dbReference type="GO" id="GO:0090435">
    <property type="term" value="P:protein localization to nuclear envelope"/>
    <property type="evidence" value="ECO:0000318"/>
    <property type="project" value="GO_Central"/>
</dbReference>
<dbReference type="FunFam" id="1.20.5.1160:FF:000016">
    <property type="entry name" value="Intermediate filament protein A"/>
    <property type="match status" value="1"/>
</dbReference>
<dbReference type="FunFam" id="2.60.40.1260:FF:000003">
    <property type="entry name" value="Intermediate filament protein A"/>
    <property type="match status" value="1"/>
</dbReference>
<dbReference type="FunFam" id="1.20.5.170:FF:000058">
    <property type="entry name" value="Intermediate filament protein B"/>
    <property type="match status" value="1"/>
</dbReference>
<dbReference type="Gene3D" id="1.20.5.170">
    <property type="match status" value="1"/>
</dbReference>
<dbReference type="Gene3D" id="2.60.40.1260">
    <property type="entry name" value="Lamin Tail domain"/>
    <property type="match status" value="1"/>
</dbReference>
<dbReference type="Gene3D" id="1.20.5.500">
    <property type="entry name" value="Single helix bin"/>
    <property type="match status" value="1"/>
</dbReference>
<dbReference type="Gene3D" id="1.20.5.1160">
    <property type="entry name" value="Vasodilator-stimulated phosphoprotein"/>
    <property type="match status" value="1"/>
</dbReference>
<dbReference type="InterPro" id="IPR018039">
    <property type="entry name" value="IF_conserved"/>
</dbReference>
<dbReference type="InterPro" id="IPR039008">
    <property type="entry name" value="IF_rod_dom"/>
</dbReference>
<dbReference type="InterPro" id="IPR016451">
    <property type="entry name" value="Intermed_filament_ifa/ifb"/>
</dbReference>
<dbReference type="InterPro" id="IPR001322">
    <property type="entry name" value="Lamin_tail_dom"/>
</dbReference>
<dbReference type="InterPro" id="IPR036415">
    <property type="entry name" value="Lamin_tail_dom_sf"/>
</dbReference>
<dbReference type="PANTHER" id="PTHR45721:SF6">
    <property type="entry name" value="INTERMEDIATE FILAMENT PROTEIN IFB-1"/>
    <property type="match status" value="1"/>
</dbReference>
<dbReference type="PANTHER" id="PTHR45721">
    <property type="entry name" value="LAMIN DM0-RELATED"/>
    <property type="match status" value="1"/>
</dbReference>
<dbReference type="Pfam" id="PF00038">
    <property type="entry name" value="Filament"/>
    <property type="match status" value="1"/>
</dbReference>
<dbReference type="Pfam" id="PF00932">
    <property type="entry name" value="LTD"/>
    <property type="match status" value="1"/>
</dbReference>
<dbReference type="PIRSF" id="PIRSF005546">
    <property type="entry name" value="Intermed_filamnt_Ifb-2"/>
    <property type="match status" value="1"/>
</dbReference>
<dbReference type="SMART" id="SM01391">
    <property type="entry name" value="Filament"/>
    <property type="match status" value="1"/>
</dbReference>
<dbReference type="SUPFAM" id="SSF64593">
    <property type="entry name" value="Intermediate filament protein, coiled coil region"/>
    <property type="match status" value="2"/>
</dbReference>
<dbReference type="SUPFAM" id="SSF74853">
    <property type="entry name" value="Lamin A/C globular tail domain"/>
    <property type="match status" value="1"/>
</dbReference>
<dbReference type="PROSITE" id="PS00226">
    <property type="entry name" value="IF_ROD_1"/>
    <property type="match status" value="1"/>
</dbReference>
<dbReference type="PROSITE" id="PS51842">
    <property type="entry name" value="IF_ROD_2"/>
    <property type="match status" value="1"/>
</dbReference>
<dbReference type="PROSITE" id="PS51841">
    <property type="entry name" value="LTD"/>
    <property type="match status" value="1"/>
</dbReference>
<name>IFB1_CAEEL</name>
<organism>
    <name type="scientific">Caenorhabditis elegans</name>
    <dbReference type="NCBI Taxonomy" id="6239"/>
    <lineage>
        <taxon>Eukaryota</taxon>
        <taxon>Metazoa</taxon>
        <taxon>Ecdysozoa</taxon>
        <taxon>Nematoda</taxon>
        <taxon>Chromadorea</taxon>
        <taxon>Rhabditida</taxon>
        <taxon>Rhabditina</taxon>
        <taxon>Rhabditomorpha</taxon>
        <taxon>Rhabditoidea</taxon>
        <taxon>Rhabditidae</taxon>
        <taxon>Peloderinae</taxon>
        <taxon>Caenorhabditis</taxon>
    </lineage>
</organism>
<evidence type="ECO:0000250" key="1"/>
<evidence type="ECO:0000255" key="2">
    <source>
        <dbReference type="PROSITE-ProRule" id="PRU01187"/>
    </source>
</evidence>
<evidence type="ECO:0000255" key="3">
    <source>
        <dbReference type="PROSITE-ProRule" id="PRU01188"/>
    </source>
</evidence>
<evidence type="ECO:0000256" key="4">
    <source>
        <dbReference type="SAM" id="MobiDB-lite"/>
    </source>
</evidence>
<evidence type="ECO:0000269" key="5">
    <source>
    </source>
</evidence>
<evidence type="ECO:0000269" key="6">
    <source>
    </source>
</evidence>
<evidence type="ECO:0000269" key="7">
    <source>
    </source>
</evidence>
<evidence type="ECO:0000269" key="8">
    <source>
    </source>
</evidence>
<evidence type="ECO:0000305" key="9"/>
<reference key="1">
    <citation type="journal article" date="1994" name="EMBO J.">
        <title>Eight genes and alternative RNA processing pathways generate an unexpectedly large diversity of cytoplasmic intermediate filament proteins in the nematode Caenorhabditis elegans.</title>
        <authorList>
            <person name="Dodemont H."/>
            <person name="Riemer D."/>
            <person name="Ledger T.N."/>
            <person name="Weber K."/>
        </authorList>
    </citation>
    <scope>NUCLEOTIDE SEQUENCE [GENOMIC DNA] (ISOFORM B)</scope>
    <source>
        <strain>Bristol N2</strain>
    </source>
</reference>
<reference key="2">
    <citation type="journal article" date="1998" name="Science">
        <title>Genome sequence of the nematode C. elegans: a platform for investigating biology.</title>
        <authorList>
            <consortium name="The C. elegans sequencing consortium"/>
        </authorList>
    </citation>
    <scope>NUCLEOTIDE SEQUENCE [LARGE SCALE GENOMIC DNA]</scope>
    <scope>ALTERNATIVE SPLICING</scope>
    <source>
        <strain>Bristol N2</strain>
    </source>
</reference>
<reference key="3">
    <citation type="journal article" date="2001" name="Proc. Natl. Acad. Sci. U.S.A.">
        <title>Essential roles for four cytoplasmic intermediate filament proteins in Caenorhabditis elegans development.</title>
        <authorList>
            <person name="Karabinos A."/>
            <person name="Schmidt H."/>
            <person name="Harborth J."/>
            <person name="Schnabel R."/>
            <person name="Weber K."/>
        </authorList>
    </citation>
    <scope>FUNCTION</scope>
    <scope>TISSUE SPECIFICITY</scope>
</reference>
<reference key="4">
    <citation type="journal article" date="2003" name="J. Mol. Biol.">
        <title>In vivo and in vitro evidence that the four essential intermediate filament (IF) proteins A1, A2, A3 and B1 of the nematode Caenorhabditis elegans form an obligate heteropolymeric IF system.</title>
        <authorList>
            <person name="Karabinos A."/>
            <person name="Schulze E."/>
            <person name="Schuenemann J."/>
            <person name="Parry D.A.D."/>
            <person name="Weber K."/>
        </authorList>
    </citation>
    <scope>FUNCTION</scope>
    <scope>INTERACTION WITH IFA-1; IFA-2; IFA-3 AND IFA-4</scope>
</reference>
<reference key="5">
    <citation type="journal article" date="2004" name="Dev. Biol.">
        <title>Intermediate filaments are required for C. elegans epidermal elongation.</title>
        <authorList>
            <person name="Woo W.-M."/>
            <person name="Goncharov A."/>
            <person name="Jin Y."/>
            <person name="Chisholm A.D."/>
        </authorList>
    </citation>
    <scope>FUNCTION</scope>
    <scope>SUBCELLULAR LOCATION</scope>
    <scope>TISSUE SPECIFICITY</scope>
</reference>
<reference key="6">
    <citation type="journal article" date="2011" name="Dev. Biol.">
        <title>PAT-12, a potential anti-nematode target, is a new spectraplakin partner essential for Caenorhabditis elegans hemidesmosome integrity and embryonic morphogenesis.</title>
        <authorList>
            <person name="Hetherington S."/>
            <person name="Gally C."/>
            <person name="Fritz J.A."/>
            <person name="Polanowska J."/>
            <person name="Reboul J."/>
            <person name="Schwab Y."/>
            <person name="Zahreddine H."/>
            <person name="Behm C."/>
            <person name="Labouesse M."/>
        </authorList>
    </citation>
    <scope>DISRUPTION PHENOTYPE</scope>
</reference>
<keyword id="KW-0025">Alternative splicing</keyword>
<keyword id="KW-0175">Coiled coil</keyword>
<keyword id="KW-0963">Cytoplasm</keyword>
<keyword id="KW-0403">Intermediate filament</keyword>
<keyword id="KW-1185">Reference proteome</keyword>
<gene>
    <name type="primary">ifb-1</name>
    <name type="ORF">F10C1.2</name>
</gene>
<proteinExistence type="evidence at protein level"/>
<accession>Q19289</accession>
<accession>Q19290</accession>
<accession>Q21063</accession>
<protein>
    <recommendedName>
        <fullName>Intermediate filament protein ifb-1</fullName>
    </recommendedName>
    <alternativeName>
        <fullName>Cel IF B1</fullName>
    </alternativeName>
    <alternativeName>
        <fullName>Intermediate filament protein B1</fullName>
        <shortName>IF-B1</shortName>
    </alternativeName>
</protein>
<comment type="function">
    <text evidence="5 6 7">Cytoplasmic intermediate filaments provide mechanical strength to cells. Essential protein, involved in attachment structures in epidermal cells that connect muscles to the external cuticle. Required in morphogenesis and epidermal integrity. Probable component of embryonic epidermal attachment structures. Functions in larval muscle attachment independently of ifa-2.</text>
</comment>
<comment type="subunit">
    <text>Forms some heteromeric filaments with ifa-1, ifa-2, ifa-3 and probably ifa-4.</text>
</comment>
<comment type="interaction">
    <interactant intactId="EBI-316236">
        <id>Q19289</id>
    </interactant>
    <interactant intactId="EBI-2413939">
        <id>A7DTF5</id>
        <label>CELE_Y56A3A.7</label>
    </interactant>
    <organismsDiffer>false</organismsDiffer>
    <experiments>4</experiments>
</comment>
<comment type="interaction">
    <interactant intactId="EBI-316236">
        <id>Q19289</id>
    </interactant>
    <interactant intactId="EBI-2315635">
        <id>Q8MPT2</id>
        <label>T04C9.1</label>
    </interactant>
    <organismsDiffer>false</organismsDiffer>
    <experiments>5</experiments>
</comment>
<comment type="subcellular location">
    <subcellularLocation>
        <location evidence="1">Cytoplasm</location>
    </subcellularLocation>
</comment>
<comment type="alternative products">
    <event type="alternative splicing"/>
    <isoform>
        <id>Q19289-1</id>
        <name>a</name>
        <name>B1b</name>
        <name>IFB-1B</name>
        <sequence type="displayed"/>
    </isoform>
    <isoform>
        <id>Q19289-2</id>
        <name>b</name>
        <name>B1a IFB-1A</name>
        <sequence type="described" ref="VSP_010147"/>
    </isoform>
</comment>
<comment type="tissue specificity">
    <text evidence="5 7">Expressed in epidermal cells. Expressed in amphid sensory neurons, the excretory cells, the vulva, the uterus, the rectum and some neurons of the tail. Isoform a and isoform b display a similar pattern of expression. Isoform a is predominant in pharyngeal tonofilaments.</text>
</comment>
<comment type="disruption phenotype">
    <text evidence="8">RNAi-mediated knockdown results in 79% embryonic lethality and 19% larval lethality. Abnormal localization of epidermal structural protein pat-12 during embryogenesis.</text>
</comment>
<comment type="similarity">
    <text evidence="3">Belongs to the intermediate filament family.</text>
</comment>
<comment type="sequence caution" evidence="9">
    <conflict type="erroneous gene model prediction">
        <sequence resource="EMBL-CDS" id="CAA50178"/>
    </conflict>
</comment>